<feature type="chain" id="PRO_0000180194" description="Acyl carrier protein">
    <location>
        <begin position="1"/>
        <end position="77"/>
    </location>
</feature>
<feature type="domain" description="Carrier" evidence="2">
    <location>
        <begin position="1"/>
        <end position="76"/>
    </location>
</feature>
<feature type="modified residue" description="O-(pantetheine 4'-phosphoryl)serine" evidence="2">
    <location>
        <position position="36"/>
    </location>
</feature>
<gene>
    <name evidence="1" type="primary">acpP</name>
    <name type="ordered locus">SE_0907</name>
</gene>
<reference key="1">
    <citation type="journal article" date="2003" name="Mol. Microbiol.">
        <title>Genome-based analysis of virulence genes in a non-biofilm-forming Staphylococcus epidermidis strain (ATCC 12228).</title>
        <authorList>
            <person name="Zhang Y.-Q."/>
            <person name="Ren S.-X."/>
            <person name="Li H.-L."/>
            <person name="Wang Y.-X."/>
            <person name="Fu G."/>
            <person name="Yang J."/>
            <person name="Qin Z.-Q."/>
            <person name="Miao Y.-G."/>
            <person name="Wang W.-Y."/>
            <person name="Chen R.-S."/>
            <person name="Shen Y."/>
            <person name="Chen Z."/>
            <person name="Yuan Z.-H."/>
            <person name="Zhao G.-P."/>
            <person name="Qu D."/>
            <person name="Danchin A."/>
            <person name="Wen Y.-M."/>
        </authorList>
    </citation>
    <scope>NUCLEOTIDE SEQUENCE [LARGE SCALE GENOMIC DNA]</scope>
    <source>
        <strain>ATCC 12228 / FDA PCI 1200</strain>
    </source>
</reference>
<organism>
    <name type="scientific">Staphylococcus epidermidis (strain ATCC 12228 / FDA PCI 1200)</name>
    <dbReference type="NCBI Taxonomy" id="176280"/>
    <lineage>
        <taxon>Bacteria</taxon>
        <taxon>Bacillati</taxon>
        <taxon>Bacillota</taxon>
        <taxon>Bacilli</taxon>
        <taxon>Bacillales</taxon>
        <taxon>Staphylococcaceae</taxon>
        <taxon>Staphylococcus</taxon>
    </lineage>
</organism>
<sequence length="77" mass="8565">MENFDKVKDIIVDRLGVDADKVTEDASFKDDLGADSLDIAELVMELEDEFGTEIPDEEAEKINTVGDAVKYINSLEK</sequence>
<proteinExistence type="inferred from homology"/>
<evidence type="ECO:0000255" key="1">
    <source>
        <dbReference type="HAMAP-Rule" id="MF_01217"/>
    </source>
</evidence>
<evidence type="ECO:0000255" key="2">
    <source>
        <dbReference type="PROSITE-ProRule" id="PRU00258"/>
    </source>
</evidence>
<protein>
    <recommendedName>
        <fullName evidence="1">Acyl carrier protein</fullName>
        <shortName evidence="1">ACP</shortName>
    </recommendedName>
</protein>
<accession>Q8CPI2</accession>
<comment type="function">
    <text evidence="1">Carrier of the growing fatty acid chain in fatty acid biosynthesis.</text>
</comment>
<comment type="pathway">
    <text evidence="1">Lipid metabolism; fatty acid biosynthesis.</text>
</comment>
<comment type="subcellular location">
    <subcellularLocation>
        <location evidence="1">Cytoplasm</location>
    </subcellularLocation>
</comment>
<comment type="PTM">
    <text evidence="1">4'-phosphopantetheine is transferred from CoA to a specific serine of apo-ACP by AcpS. This modification is essential for activity because fatty acids are bound in thioester linkage to the sulfhydryl of the prosthetic group.</text>
</comment>
<comment type="similarity">
    <text evidence="1">Belongs to the acyl carrier protein (ACP) family.</text>
</comment>
<dbReference type="EMBL" id="AE015929">
    <property type="protein sequence ID" value="AAO04504.1"/>
    <property type="molecule type" value="Genomic_DNA"/>
</dbReference>
<dbReference type="RefSeq" id="NP_764462.1">
    <property type="nucleotide sequence ID" value="NC_004461.1"/>
</dbReference>
<dbReference type="RefSeq" id="WP_001830184.1">
    <property type="nucleotide sequence ID" value="NZ_WBME01000001.1"/>
</dbReference>
<dbReference type="SMR" id="Q8CPI2"/>
<dbReference type="KEGG" id="sep:SE_0907"/>
<dbReference type="PATRIC" id="fig|176280.10.peg.880"/>
<dbReference type="eggNOG" id="COG0236">
    <property type="taxonomic scope" value="Bacteria"/>
</dbReference>
<dbReference type="HOGENOM" id="CLU_108696_5_1_9"/>
<dbReference type="OrthoDB" id="9804551at2"/>
<dbReference type="UniPathway" id="UPA00094"/>
<dbReference type="PRO" id="PR:Q8CPI2"/>
<dbReference type="Proteomes" id="UP000001411">
    <property type="component" value="Chromosome"/>
</dbReference>
<dbReference type="GO" id="GO:0005829">
    <property type="term" value="C:cytosol"/>
    <property type="evidence" value="ECO:0007669"/>
    <property type="project" value="TreeGrafter"/>
</dbReference>
<dbReference type="GO" id="GO:0016020">
    <property type="term" value="C:membrane"/>
    <property type="evidence" value="ECO:0007669"/>
    <property type="project" value="GOC"/>
</dbReference>
<dbReference type="GO" id="GO:0000035">
    <property type="term" value="F:acyl binding"/>
    <property type="evidence" value="ECO:0007669"/>
    <property type="project" value="TreeGrafter"/>
</dbReference>
<dbReference type="GO" id="GO:0000036">
    <property type="term" value="F:acyl carrier activity"/>
    <property type="evidence" value="ECO:0007669"/>
    <property type="project" value="UniProtKB-UniRule"/>
</dbReference>
<dbReference type="GO" id="GO:0009245">
    <property type="term" value="P:lipid A biosynthetic process"/>
    <property type="evidence" value="ECO:0007669"/>
    <property type="project" value="TreeGrafter"/>
</dbReference>
<dbReference type="FunFam" id="1.10.1200.10:FF:000001">
    <property type="entry name" value="Acyl carrier protein"/>
    <property type="match status" value="1"/>
</dbReference>
<dbReference type="Gene3D" id="1.10.1200.10">
    <property type="entry name" value="ACP-like"/>
    <property type="match status" value="1"/>
</dbReference>
<dbReference type="HAMAP" id="MF_01217">
    <property type="entry name" value="Acyl_carrier"/>
    <property type="match status" value="1"/>
</dbReference>
<dbReference type="InterPro" id="IPR003231">
    <property type="entry name" value="ACP"/>
</dbReference>
<dbReference type="InterPro" id="IPR036736">
    <property type="entry name" value="ACP-like_sf"/>
</dbReference>
<dbReference type="InterPro" id="IPR009081">
    <property type="entry name" value="PP-bd_ACP"/>
</dbReference>
<dbReference type="InterPro" id="IPR006162">
    <property type="entry name" value="Ppantetheine_attach_site"/>
</dbReference>
<dbReference type="NCBIfam" id="TIGR00517">
    <property type="entry name" value="acyl_carrier"/>
    <property type="match status" value="1"/>
</dbReference>
<dbReference type="NCBIfam" id="NF002148">
    <property type="entry name" value="PRK00982.1-2"/>
    <property type="match status" value="1"/>
</dbReference>
<dbReference type="NCBIfam" id="NF002150">
    <property type="entry name" value="PRK00982.1-4"/>
    <property type="match status" value="1"/>
</dbReference>
<dbReference type="NCBIfam" id="NF002151">
    <property type="entry name" value="PRK00982.1-5"/>
    <property type="match status" value="1"/>
</dbReference>
<dbReference type="PANTHER" id="PTHR20863">
    <property type="entry name" value="ACYL CARRIER PROTEIN"/>
    <property type="match status" value="1"/>
</dbReference>
<dbReference type="PANTHER" id="PTHR20863:SF76">
    <property type="entry name" value="CARRIER DOMAIN-CONTAINING PROTEIN"/>
    <property type="match status" value="1"/>
</dbReference>
<dbReference type="Pfam" id="PF00550">
    <property type="entry name" value="PP-binding"/>
    <property type="match status" value="1"/>
</dbReference>
<dbReference type="SUPFAM" id="SSF47336">
    <property type="entry name" value="ACP-like"/>
    <property type="match status" value="1"/>
</dbReference>
<dbReference type="PROSITE" id="PS50075">
    <property type="entry name" value="CARRIER"/>
    <property type="match status" value="1"/>
</dbReference>
<dbReference type="PROSITE" id="PS00012">
    <property type="entry name" value="PHOSPHOPANTETHEINE"/>
    <property type="match status" value="1"/>
</dbReference>
<name>ACP_STAES</name>
<keyword id="KW-0963">Cytoplasm</keyword>
<keyword id="KW-0275">Fatty acid biosynthesis</keyword>
<keyword id="KW-0276">Fatty acid metabolism</keyword>
<keyword id="KW-0444">Lipid biosynthesis</keyword>
<keyword id="KW-0443">Lipid metabolism</keyword>
<keyword id="KW-0596">Phosphopantetheine</keyword>
<keyword id="KW-0597">Phosphoprotein</keyword>